<reference key="1">
    <citation type="journal article" date="2002" name="Lancet">
        <title>Genome and virulence determinants of high virulence community-acquired MRSA.</title>
        <authorList>
            <person name="Baba T."/>
            <person name="Takeuchi F."/>
            <person name="Kuroda M."/>
            <person name="Yuzawa H."/>
            <person name="Aoki K."/>
            <person name="Oguchi A."/>
            <person name="Nagai Y."/>
            <person name="Iwama N."/>
            <person name="Asano K."/>
            <person name="Naimi T."/>
            <person name="Kuroda H."/>
            <person name="Cui L."/>
            <person name="Yamamoto K."/>
            <person name="Hiramatsu K."/>
        </authorList>
    </citation>
    <scope>NUCLEOTIDE SEQUENCE [LARGE SCALE GENOMIC DNA]</scope>
    <source>
        <strain>MW2</strain>
    </source>
</reference>
<comment type="function">
    <text>Involved in arsenical resistance. Thought to form the channel of an arsenite pump.</text>
</comment>
<comment type="subcellular location">
    <subcellularLocation>
        <location evidence="2">Cell membrane</location>
        <topology evidence="2">Multi-pass membrane protein</topology>
    </subcellularLocation>
</comment>
<comment type="similarity">
    <text evidence="2">Belongs to the ArsB family.</text>
</comment>
<comment type="sequence caution" evidence="2">
    <conflict type="erroneous initiation">
        <sequence resource="EMBL-CDS" id="BAB95579"/>
    </conflict>
</comment>
<dbReference type="EMBL" id="BA000033">
    <property type="protein sequence ID" value="BAB95579.1"/>
    <property type="status" value="ALT_INIT"/>
    <property type="molecule type" value="Genomic_DNA"/>
</dbReference>
<dbReference type="SMR" id="Q8NW09"/>
<dbReference type="KEGG" id="sam:MW1714"/>
<dbReference type="HOGENOM" id="CLU_043931_1_0_9"/>
<dbReference type="GO" id="GO:0005886">
    <property type="term" value="C:plasma membrane"/>
    <property type="evidence" value="ECO:0007669"/>
    <property type="project" value="UniProtKB-SubCell"/>
</dbReference>
<dbReference type="GO" id="GO:0015105">
    <property type="term" value="F:arsenite transmembrane transporter activity"/>
    <property type="evidence" value="ECO:0007669"/>
    <property type="project" value="InterPro"/>
</dbReference>
<dbReference type="GO" id="GO:0046685">
    <property type="term" value="P:response to arsenic-containing substance"/>
    <property type="evidence" value="ECO:0007669"/>
    <property type="project" value="UniProtKB-KW"/>
</dbReference>
<dbReference type="CDD" id="cd01118">
    <property type="entry name" value="ArsB_permease"/>
    <property type="match status" value="1"/>
</dbReference>
<dbReference type="InterPro" id="IPR000802">
    <property type="entry name" value="Arsenical_pump_ArsB"/>
</dbReference>
<dbReference type="NCBIfam" id="TIGR00935">
    <property type="entry name" value="2a45"/>
    <property type="match status" value="1"/>
</dbReference>
<dbReference type="NCBIfam" id="NF033877">
    <property type="entry name" value="arsB_Sta_pI258"/>
    <property type="match status" value="1"/>
</dbReference>
<dbReference type="NCBIfam" id="NF011980">
    <property type="entry name" value="PRK15445.1"/>
    <property type="match status" value="1"/>
</dbReference>
<dbReference type="PANTHER" id="PTHR43302">
    <property type="entry name" value="TRANSPORTER ARSB-RELATED"/>
    <property type="match status" value="1"/>
</dbReference>
<dbReference type="PANTHER" id="PTHR43302:SF5">
    <property type="entry name" value="TRANSPORTER ARSB-RELATED"/>
    <property type="match status" value="1"/>
</dbReference>
<dbReference type="Pfam" id="PF02040">
    <property type="entry name" value="ArsB"/>
    <property type="match status" value="1"/>
</dbReference>
<dbReference type="PRINTS" id="PR00758">
    <property type="entry name" value="ARSENICPUMP"/>
</dbReference>
<evidence type="ECO:0000255" key="1"/>
<evidence type="ECO:0000305" key="2"/>
<protein>
    <recommendedName>
        <fullName>Arsenical pump membrane protein</fullName>
    </recommendedName>
    <alternativeName>
        <fullName>Arsenic efflux pump protein</fullName>
    </alternativeName>
</protein>
<accession>Q8NW09</accession>
<keyword id="KW-0059">Arsenical resistance</keyword>
<keyword id="KW-1003">Cell membrane</keyword>
<keyword id="KW-0472">Membrane</keyword>
<keyword id="KW-0812">Transmembrane</keyword>
<keyword id="KW-1133">Transmembrane helix</keyword>
<keyword id="KW-0813">Transport</keyword>
<organism>
    <name type="scientific">Staphylococcus aureus (strain MW2)</name>
    <dbReference type="NCBI Taxonomy" id="196620"/>
    <lineage>
        <taxon>Bacteria</taxon>
        <taxon>Bacillati</taxon>
        <taxon>Bacillota</taxon>
        <taxon>Bacilli</taxon>
        <taxon>Bacillales</taxon>
        <taxon>Staphylococcaceae</taxon>
        <taxon>Staphylococcus</taxon>
    </lineage>
</organism>
<sequence length="429" mass="47183">MTTLATLIFLVTLLFVLWQPKGLDIGITALTGAFIAVITGVVSFSDVFEVTGIVWNATLTFVSVILISLILDKVGLFEWSAIHMLHASKGNGLKMFVYIILLGAIVAAFFANDGAALILTPIVLAMVKNIGFSKRAIFPFIIASGFIADTTSLPLIVSNLVNIISADYFHIGFIRYFSRMIIPNLFSLLASIIVLWLYFRKAIPKTFDDNNIKHPKDAINDLKLFKISWIVLVILLFGYLISEFTKIPVSIFTGIIAFIFLMLARKSNALNIKQVIKGAPWNIVLFSIGMYIVVFGLRNAGITLILAKILEYISNYGLFSTILGMGFISAFLSSIMNNMPTVLIDAIAIGQSNVHGMLKEGLIYANVIGSDLGPKITPIGSLATLLWLHVLTQKDVKISWGTYFKTGIIITIPVLFITLIGLYLTLIIF</sequence>
<proteinExistence type="inferred from homology"/>
<name>ARSB_STAAW</name>
<feature type="chain" id="PRO_0000201476" description="Arsenical pump membrane protein">
    <location>
        <begin position="1"/>
        <end position="429"/>
    </location>
</feature>
<feature type="transmembrane region" description="Helical" evidence="1">
    <location>
        <begin position="3"/>
        <end position="23"/>
    </location>
</feature>
<feature type="transmembrane region" description="Helical" evidence="1">
    <location>
        <begin position="25"/>
        <end position="45"/>
    </location>
</feature>
<feature type="transmembrane region" description="Helical" evidence="1">
    <location>
        <begin position="50"/>
        <end position="70"/>
    </location>
</feature>
<feature type="transmembrane region" description="Helical" evidence="1">
    <location>
        <begin position="99"/>
        <end position="119"/>
    </location>
</feature>
<feature type="transmembrane region" description="Helical" evidence="1">
    <location>
        <begin position="137"/>
        <end position="157"/>
    </location>
</feature>
<feature type="transmembrane region" description="Helical" evidence="1">
    <location>
        <begin position="180"/>
        <end position="200"/>
    </location>
</feature>
<feature type="transmembrane region" description="Helical" evidence="1">
    <location>
        <begin position="222"/>
        <end position="242"/>
    </location>
</feature>
<feature type="transmembrane region" description="Helical" evidence="1">
    <location>
        <begin position="244"/>
        <end position="264"/>
    </location>
</feature>
<feature type="transmembrane region" description="Helical" evidence="1">
    <location>
        <begin position="275"/>
        <end position="295"/>
    </location>
</feature>
<feature type="transmembrane region" description="Helical" evidence="1">
    <location>
        <begin position="316"/>
        <end position="336"/>
    </location>
</feature>
<feature type="transmembrane region" description="Helical" evidence="1">
    <location>
        <begin position="372"/>
        <end position="392"/>
    </location>
</feature>
<feature type="transmembrane region" description="Helical" evidence="1">
    <location>
        <begin position="408"/>
        <end position="428"/>
    </location>
</feature>
<gene>
    <name type="primary">arsB</name>
    <name type="ordered locus">MW1714</name>
</gene>